<organismHost>
    <name type="scientific">Escherichia coli</name>
    <dbReference type="NCBI Taxonomy" id="562"/>
</organismHost>
<feature type="chain" id="PRO_0000165074" description="Small outer capsid protein">
    <location>
        <begin position="1"/>
        <end position="80"/>
    </location>
</feature>
<feature type="sequence conflict" description="In Ref. 4; AA sequence." evidence="6" ref="4">
    <original>K</original>
    <variation>GKEFHK</variation>
    <location>
        <position position="40"/>
    </location>
</feature>
<feature type="sequence conflict" description="In Ref. 4; AA sequence." evidence="6" ref="4">
    <original>H</original>
    <variation>T</variation>
    <location>
        <position position="45"/>
    </location>
</feature>
<feature type="strand" evidence="7">
    <location>
        <begin position="7"/>
        <end position="12"/>
    </location>
</feature>
<feature type="strand" evidence="7">
    <location>
        <begin position="27"/>
        <end position="31"/>
    </location>
</feature>
<feature type="helix" evidence="7">
    <location>
        <begin position="32"/>
        <end position="37"/>
    </location>
</feature>
<feature type="strand" evidence="7">
    <location>
        <begin position="42"/>
        <end position="44"/>
    </location>
</feature>
<feature type="strand" evidence="7">
    <location>
        <begin position="46"/>
        <end position="53"/>
    </location>
</feature>
<feature type="strand" evidence="7">
    <location>
        <begin position="56"/>
        <end position="60"/>
    </location>
</feature>
<feature type="helix" evidence="7">
    <location>
        <begin position="66"/>
        <end position="72"/>
    </location>
</feature>
<feature type="helix" evidence="7">
    <location>
        <begin position="73"/>
        <end position="76"/>
    </location>
</feature>
<keyword id="KW-0002">3D-structure</keyword>
<keyword id="KW-1232">Capsid decoration protein</keyword>
<keyword id="KW-0167">Capsid protein</keyword>
<keyword id="KW-0903">Direct protein sequencing</keyword>
<keyword id="KW-1185">Reference proteome</keyword>
<keyword id="KW-0946">Virion</keyword>
<evidence type="ECO:0000250" key="1">
    <source>
        <dbReference type="UniProtKB" id="Q7Y5B1"/>
    </source>
</evidence>
<evidence type="ECO:0000255" key="2">
    <source>
        <dbReference type="HAMAP-Rule" id="MF_04115"/>
    </source>
</evidence>
<evidence type="ECO:0000269" key="3">
    <source>
    </source>
</evidence>
<evidence type="ECO:0000269" key="4">
    <source>
    </source>
</evidence>
<evidence type="ECO:0000269" key="5">
    <source>
    </source>
</evidence>
<evidence type="ECO:0000305" key="6"/>
<evidence type="ECO:0007829" key="7">
    <source>
        <dbReference type="PDB" id="5VF3"/>
    </source>
</evidence>
<organism>
    <name type="scientific">Enterobacteria phage T4</name>
    <name type="common">Bacteriophage T4</name>
    <dbReference type="NCBI Taxonomy" id="10665"/>
    <lineage>
        <taxon>Viruses</taxon>
        <taxon>Duplodnaviria</taxon>
        <taxon>Heunggongvirae</taxon>
        <taxon>Uroviricota</taxon>
        <taxon>Caudoviricetes</taxon>
        <taxon>Straboviridae</taxon>
        <taxon>Tevenvirinae</taxon>
        <taxon>Tequatrovirus</taxon>
    </lineage>
</organism>
<protein>
    <recommendedName>
        <fullName evidence="2">Small outer capsid protein</fullName>
        <shortName>Soc</shortName>
    </recommendedName>
</protein>
<name>SOC_BPT4</name>
<comment type="function">
    <text evidence="2 3 4 5">Capsid decoration protein which helps to stabilize the capsid against extremes of pH and temperature. Once maturation and expansion of the capsid has occured, trimers of soc attach the interfaces between the hexamer of the major capsid protein. Acts as a 'glue' between neighboring hexameric capsomers. Dispensable for the head morphogenesis and phage infection.</text>
</comment>
<comment type="subunit">
    <text evidence="2 3 4">Homotrimer. Interacts with the major capsid protein; three soc molecules associate with each interface between the major capsid protein facets.</text>
</comment>
<comment type="subcellular location">
    <subcellularLocation>
        <location evidence="2 3 5">Virion</location>
    </subcellularLocation>
    <text evidence="1">870 copies decorate the capsid.</text>
</comment>
<comment type="similarity">
    <text evidence="2">Belongs to the Tevenvirinae Soc family.</text>
</comment>
<dbReference type="EMBL" id="X01416">
    <property type="protein sequence ID" value="CAA25663.1"/>
    <property type="molecule type" value="Genomic_DNA"/>
</dbReference>
<dbReference type="EMBL" id="M30001">
    <property type="protein sequence ID" value="AAB07793.1"/>
    <property type="molecule type" value="Genomic_DNA"/>
</dbReference>
<dbReference type="EMBL" id="K03113">
    <property type="protein sequence ID" value="AAA32557.1"/>
    <property type="molecule type" value="Genomic_DNA"/>
</dbReference>
<dbReference type="EMBL" id="AF158101">
    <property type="protein sequence ID" value="AAD42659.1"/>
    <property type="molecule type" value="Genomic_DNA"/>
</dbReference>
<dbReference type="PIR" id="A04342">
    <property type="entry name" value="VHBPC4"/>
</dbReference>
<dbReference type="RefSeq" id="NP_049644.1">
    <property type="nucleotide sequence ID" value="NC_000866.4"/>
</dbReference>
<dbReference type="PDB" id="5VF3">
    <property type="method" value="EM"/>
    <property type="resolution" value="3.30 A"/>
    <property type="chains" value="O/P/Q/R/S/T/U/V/W/X/Y=1-80"/>
</dbReference>
<dbReference type="PDB" id="7VS5">
    <property type="method" value="EM"/>
    <property type="resolution" value="3.40 A"/>
    <property type="chains" value="hp/hq/hr/hs/ht/hu/hv/hw/hx/hy/hz/ia/ib/ic/id/ie/if/ig/ih/ii/ij/ik/il/im/in/io/ip/iq/ir/is=1-80"/>
</dbReference>
<dbReference type="PDBsum" id="5VF3"/>
<dbReference type="PDBsum" id="7VS5"/>
<dbReference type="EMDB" id="EMD-32109"/>
<dbReference type="EMDB" id="EMD-8661"/>
<dbReference type="SMR" id="P03715"/>
<dbReference type="GeneID" id="1258783"/>
<dbReference type="KEGG" id="vg:1258783"/>
<dbReference type="OrthoDB" id="23172at10239"/>
<dbReference type="Proteomes" id="UP000009087">
    <property type="component" value="Segment"/>
</dbReference>
<dbReference type="GO" id="GO:0098021">
    <property type="term" value="C:viral capsid, decoration"/>
    <property type="evidence" value="ECO:0000315"/>
    <property type="project" value="CACAO"/>
</dbReference>
<dbReference type="Gene3D" id="3.90.930.20">
    <property type="entry name" value="Small outer capsid protein Soc"/>
    <property type="match status" value="1"/>
</dbReference>
<dbReference type="HAMAP" id="MF_04115">
    <property type="entry name" value="SOC_T4"/>
    <property type="match status" value="1"/>
</dbReference>
<dbReference type="InterPro" id="IPR031743">
    <property type="entry name" value="Soc"/>
</dbReference>
<dbReference type="InterPro" id="IPR038151">
    <property type="entry name" value="Soc_sf"/>
</dbReference>
<dbReference type="Pfam" id="PF16855">
    <property type="entry name" value="Soc"/>
    <property type="match status" value="1"/>
</dbReference>
<proteinExistence type="evidence at protein level"/>
<sequence length="80" mass="9117">MASTRGYVNIKTFEQKLDGNKKIEGKEISVAFPLYSDVHKISGAHYQTFPSEKAAYSTVYEENQRTEWIAANEDLWKVTG</sequence>
<reference key="1">
    <citation type="journal article" date="1984" name="EMBO J.">
        <title>Regulation of a new bacteriophage T4 gene, 69, that spans an origin of DNA replication.</title>
        <authorList>
            <person name="McDonald P.M."/>
            <person name="Mosig G."/>
        </authorList>
    </citation>
    <scope>NUCLEOTIDE SEQUENCE [GENOMIC DNA]</scope>
</reference>
<reference key="2">
    <citation type="journal article" date="1984" name="Genetics">
        <title>Regulation of a bacteriophage T4 late gene, soc, which maps in an early region.</title>
        <authorList>
            <person name="Macdonald P.M."/>
            <person name="Kutter E.M."/>
            <person name="Mosig G."/>
        </authorList>
    </citation>
    <scope>NUCLEOTIDE SEQUENCE [GENOMIC DNA]</scope>
</reference>
<reference key="3">
    <citation type="journal article" date="2003" name="Microbiol. Mol. Biol. Rev.">
        <title>Bacteriophage T4 genome.</title>
        <authorList>
            <person name="Miller E.S."/>
            <person name="Kutter E."/>
            <person name="Mosig G."/>
            <person name="Arisaka F."/>
            <person name="Kunisawa T."/>
            <person name="Ruger W."/>
        </authorList>
    </citation>
    <scope>NUCLEOTIDE SEQUENCE [LARGE SCALE GENOMIC DNA]</scope>
</reference>
<reference key="4">
    <citation type="journal article" date="1978" name="J. Mol. Biol.">
        <title>Complete primary structure of the small outer capsid (soc) protein of bacteriophage T4.</title>
        <authorList>
            <person name="Bijlenga R.K.L."/>
            <person name="Ishii T."/>
            <person name="Tsugita A."/>
        </authorList>
    </citation>
    <scope>PROTEIN SEQUENCE OF 2-80</scope>
</reference>
<reference key="5">
    <citation type="journal article" date="1992" name="J. Mol. Biol.">
        <title>Conformational changes of a viral capsid protein. Thermodynamic rationale for proteolytic regulation of bacteriophage T4 capsid expansion, co-operativity, and super-stabilization by soc binding.</title>
        <authorList>
            <person name="Steven A.C."/>
            <person name="Greenstone H.L."/>
            <person name="Booy F.P."/>
            <person name="Black L.W."/>
            <person name="Ross P.D."/>
        </authorList>
    </citation>
    <scope>FUNCTION</scope>
    <scope>SUBUNIT</scope>
    <scope>INTERACTION WITH THE MAJOR CAPSID PROTEIN</scope>
</reference>
<reference key="6">
    <citation type="journal article" date="2010" name="Virol. J.">
        <title>Structure and assembly of bacteriophage T4 head.</title>
        <authorList>
            <person name="Rao V.B."/>
            <person name="Black L.W."/>
        </authorList>
    </citation>
    <scope>REVIEW</scope>
</reference>
<reference key="7">
    <citation type="journal article" date="2001" name="Virology">
        <title>The structure of isometric capsids of bacteriophage T4.</title>
        <authorList>
            <person name="Olson N.H."/>
            <person name="Gingery M."/>
            <person name="Eiserling F.A."/>
            <person name="Baker T.S."/>
        </authorList>
    </citation>
    <scope>STRUCTURE BY ELECTRON MICROSCOPY (15.0 ANGSTROMS)</scope>
    <scope>INTERACTION WITH THE MAJOR CAPSID PROTEIN</scope>
    <scope>FUNCTION</scope>
    <scope>SUBCELLULAR LOCATION</scope>
</reference>
<reference key="8">
    <citation type="journal article" date="2004" name="Proc. Natl. Acad. Sci. U.S.A.">
        <title>Molecular architecture of the prolate head of bacteriophage T4.</title>
        <authorList>
            <person name="Fokine A."/>
            <person name="Chipman P.R."/>
            <person name="Leiman P.G."/>
            <person name="Mesyanzhinov V.V."/>
            <person name="Rao V.B."/>
            <person name="Rossmann M.G."/>
        </authorList>
    </citation>
    <scope>STRUCTURE BY ELECTRON MICROSCOPY (22.0 ANGSTROMS)</scope>
    <scope>FUNCTION</scope>
    <scope>SUBCELLULAR LOCATION</scope>
</reference>
<accession>P03715</accession>
<gene>
    <name type="primary">soc</name>
</gene>